<reference key="1">
    <citation type="journal article" date="1995" name="Science">
        <title>Whole-genome random sequencing and assembly of Haemophilus influenzae Rd.</title>
        <authorList>
            <person name="Fleischmann R.D."/>
            <person name="Adams M.D."/>
            <person name="White O."/>
            <person name="Clayton R.A."/>
            <person name="Kirkness E.F."/>
            <person name="Kerlavage A.R."/>
            <person name="Bult C.J."/>
            <person name="Tomb J.-F."/>
            <person name="Dougherty B.A."/>
            <person name="Merrick J.M."/>
            <person name="McKenney K."/>
            <person name="Sutton G.G."/>
            <person name="FitzHugh W."/>
            <person name="Fields C.A."/>
            <person name="Gocayne J.D."/>
            <person name="Scott J.D."/>
            <person name="Shirley R."/>
            <person name="Liu L.-I."/>
            <person name="Glodek A."/>
            <person name="Kelley J.M."/>
            <person name="Weidman J.F."/>
            <person name="Phillips C.A."/>
            <person name="Spriggs T."/>
            <person name="Hedblom E."/>
            <person name="Cotton M.D."/>
            <person name="Utterback T.R."/>
            <person name="Hanna M.C."/>
            <person name="Nguyen D.T."/>
            <person name="Saudek D.M."/>
            <person name="Brandon R.C."/>
            <person name="Fine L.D."/>
            <person name="Fritchman J.L."/>
            <person name="Fuhrmann J.L."/>
            <person name="Geoghagen N.S.M."/>
            <person name="Gnehm C.L."/>
            <person name="McDonald L.A."/>
            <person name="Small K.V."/>
            <person name="Fraser C.M."/>
            <person name="Smith H.O."/>
            <person name="Venter J.C."/>
        </authorList>
    </citation>
    <scope>NUCLEOTIDE SEQUENCE [LARGE SCALE GENOMIC DNA]</scope>
    <source>
        <strain>ATCC 51907 / DSM 11121 / KW20 / Rd</strain>
    </source>
</reference>
<reference key="2">
    <citation type="journal article" date="2005" name="J. Bacteriol.">
        <title>OpsX from Haemophilus influenzae represents a novel type of heptosyltransferase I in lipopolysaccharide biosynthesis.</title>
        <authorList>
            <person name="Gronow S."/>
            <person name="Brabetz W."/>
            <person name="Lindner B."/>
            <person name="Brade H."/>
        </authorList>
    </citation>
    <scope>FUNCTION</scope>
    <scope>PATHWAY</scope>
    <source>
        <strain>ATCC 51907 / DSM 11121 / KW20 / Rd</strain>
    </source>
</reference>
<organism>
    <name type="scientific">Haemophilus influenzae (strain ATCC 51907 / DSM 11121 / KW20 / Rd)</name>
    <dbReference type="NCBI Taxonomy" id="71421"/>
    <lineage>
        <taxon>Bacteria</taxon>
        <taxon>Pseudomonadati</taxon>
        <taxon>Pseudomonadota</taxon>
        <taxon>Gammaproteobacteria</taxon>
        <taxon>Pasteurellales</taxon>
        <taxon>Pasteurellaceae</taxon>
        <taxon>Haemophilus</taxon>
    </lineage>
</organism>
<dbReference type="EC" id="2.-.-.-" evidence="3"/>
<dbReference type="EMBL" id="L42023">
    <property type="protein sequence ID" value="AAC21926.1"/>
    <property type="molecule type" value="Genomic_DNA"/>
</dbReference>
<dbReference type="PIR" id="B64058">
    <property type="entry name" value="B64058"/>
</dbReference>
<dbReference type="RefSeq" id="NP_438430.1">
    <property type="nucleotide sequence ID" value="NC_000907.1"/>
</dbReference>
<dbReference type="SMR" id="Q57336"/>
<dbReference type="STRING" id="71421.HI_0261"/>
<dbReference type="CAZy" id="GT9">
    <property type="family name" value="Glycosyltransferase Family 9"/>
</dbReference>
<dbReference type="DNASU" id="950896"/>
<dbReference type="EnsemblBacteria" id="AAC21926">
    <property type="protein sequence ID" value="AAC21926"/>
    <property type="gene ID" value="HI_0261"/>
</dbReference>
<dbReference type="KEGG" id="hin:HI_0261"/>
<dbReference type="PATRIC" id="fig|71421.8.peg.276"/>
<dbReference type="eggNOG" id="COG0859">
    <property type="taxonomic scope" value="Bacteria"/>
</dbReference>
<dbReference type="HOGENOM" id="CLU_038371_2_0_6"/>
<dbReference type="OrthoDB" id="9781892at2"/>
<dbReference type="PhylomeDB" id="Q57336"/>
<dbReference type="BioCyc" id="HINF71421:G1GJ1-276-MONOMER"/>
<dbReference type="UniPathway" id="UPA00958"/>
<dbReference type="Proteomes" id="UP000000579">
    <property type="component" value="Chromosome"/>
</dbReference>
<dbReference type="GO" id="GO:0005829">
    <property type="term" value="C:cytosol"/>
    <property type="evidence" value="ECO:0000318"/>
    <property type="project" value="GO_Central"/>
</dbReference>
<dbReference type="GO" id="GO:0008713">
    <property type="term" value="F:ADP-heptose-lipopolysaccharide heptosyltransferase activity"/>
    <property type="evidence" value="ECO:0000318"/>
    <property type="project" value="GO_Central"/>
</dbReference>
<dbReference type="GO" id="GO:0008920">
    <property type="term" value="F:lipopolysaccharide heptosyltransferase activity"/>
    <property type="evidence" value="ECO:0000314"/>
    <property type="project" value="UniProtKB"/>
</dbReference>
<dbReference type="GO" id="GO:0009244">
    <property type="term" value="P:lipopolysaccharide core region biosynthetic process"/>
    <property type="evidence" value="ECO:0000318"/>
    <property type="project" value="GO_Central"/>
</dbReference>
<dbReference type="CDD" id="cd03789">
    <property type="entry name" value="GT9_LPS_heptosyltransferase"/>
    <property type="match status" value="1"/>
</dbReference>
<dbReference type="FunFam" id="3.40.50.2000:FF:000023">
    <property type="entry name" value="ADP-heptose--LPS heptosyltransferase II"/>
    <property type="match status" value="1"/>
</dbReference>
<dbReference type="FunFam" id="3.40.50.2000:FF:000164">
    <property type="entry name" value="Lipopolysaccharide heptosyltransferase I"/>
    <property type="match status" value="1"/>
</dbReference>
<dbReference type="Gene3D" id="3.40.50.2000">
    <property type="entry name" value="Glycogen Phosphorylase B"/>
    <property type="match status" value="2"/>
</dbReference>
<dbReference type="InterPro" id="IPR002201">
    <property type="entry name" value="Glyco_trans_9"/>
</dbReference>
<dbReference type="InterPro" id="IPR051199">
    <property type="entry name" value="LPS_LOS_Heptosyltrfase"/>
</dbReference>
<dbReference type="PANTHER" id="PTHR30160:SF21">
    <property type="entry name" value="LIPOPOLYSACCHARIDE CORE HEPTOSYLTRANSFERASE OPSX"/>
    <property type="match status" value="1"/>
</dbReference>
<dbReference type="PANTHER" id="PTHR30160">
    <property type="entry name" value="TETRAACYLDISACCHARIDE 4'-KINASE-RELATED"/>
    <property type="match status" value="1"/>
</dbReference>
<dbReference type="Pfam" id="PF01075">
    <property type="entry name" value="Glyco_transf_9"/>
    <property type="match status" value="1"/>
</dbReference>
<dbReference type="SUPFAM" id="SSF53756">
    <property type="entry name" value="UDP-Glycosyltransferase/glycogen phosphorylase"/>
    <property type="match status" value="1"/>
</dbReference>
<accession>Q57336</accession>
<accession>O05014</accession>
<proteinExistence type="inferred from homology"/>
<sequence length="347" mass="38938">MPLFTEAPKSLCILRLSAVGDVCHALAVVQHIQEYYPQTEMTWIVGKTEMGLLSSIPNITLIPYDKKTGWKGVLSLWKQLKNKQFDALLNMQTAFRASILSLGIKAKFKIGFGEKRSREGQWLFVNRRIRDPFSPHVLDGFMAFAEYIGVPKAEPKWELAISQDDYKFADQFIDFSRKNLLISPCSSKAEKDWLIEGYAEVANIAHQHNINVIFCSSPAKRELEIVEKITALCHFTPTNIAGKTNLKQLTALISKVDLVLSPDSGPAHIATTQGTPVIGLYAYHNPLRTAPYNNLDNVVSVYEENAQKEFGKPSSELPWATKLKGKNLMTEIQVEPVIGQMKKLGLF</sequence>
<evidence type="ECO:0000269" key="1">
    <source>
    </source>
</evidence>
<evidence type="ECO:0000303" key="2">
    <source>
    </source>
</evidence>
<evidence type="ECO:0000305" key="3"/>
<evidence type="ECO:0000305" key="4">
    <source>
    </source>
</evidence>
<feature type="chain" id="PRO_0000207266" description="Lipopolysaccharide core heptosyltransferase OpsX">
    <location>
        <begin position="1"/>
        <end position="347"/>
    </location>
</feature>
<keyword id="KW-0328">Glycosyltransferase</keyword>
<keyword id="KW-0448">Lipopolysaccharide biosynthesis</keyword>
<keyword id="KW-1185">Reference proteome</keyword>
<keyword id="KW-0808">Transferase</keyword>
<comment type="function">
    <text evidence="1">Catalyzes heptose transfer to the lipopolysaccharide core. It transfers the first L-glycero-D-manno-heptose to the phosphorylated 3-deoxy-alpha-D-manno-octulosonic acid (Kdo-P) of the inner core.</text>
</comment>
<comment type="pathway">
    <text evidence="4">Bacterial outer membrane biogenesis; LPS core biosynthesis.</text>
</comment>
<comment type="similarity">
    <text evidence="3">Belongs to the glycosyltransferase 9 family.</text>
</comment>
<gene>
    <name evidence="2" type="primary">opsX</name>
    <name type="ordered locus">HI_0261</name>
</gene>
<name>OPSX_HAEIN</name>
<protein>
    <recommendedName>
        <fullName evidence="2">Lipopolysaccharide core heptosyltransferase OpsX</fullName>
        <ecNumber evidence="3">2.-.-.-</ecNumber>
    </recommendedName>
</protein>